<organism>
    <name type="scientific">Xanthobacter autotrophicus (strain ATCC BAA-1158 / Py2)</name>
    <dbReference type="NCBI Taxonomy" id="78245"/>
    <lineage>
        <taxon>Bacteria</taxon>
        <taxon>Pseudomonadati</taxon>
        <taxon>Pseudomonadota</taxon>
        <taxon>Alphaproteobacteria</taxon>
        <taxon>Hyphomicrobiales</taxon>
        <taxon>Xanthobacteraceae</taxon>
        <taxon>Xanthobacter</taxon>
    </lineage>
</organism>
<accession>A7IEQ6</accession>
<keyword id="KW-0963">Cytoplasm</keyword>
<keyword id="KW-0312">Gluconeogenesis</keyword>
<keyword id="KW-0324">Glycolysis</keyword>
<keyword id="KW-0413">Isomerase</keyword>
<keyword id="KW-1185">Reference proteome</keyword>
<proteinExistence type="inferred from homology"/>
<comment type="function">
    <text evidence="1">Catalyzes the reversible isomerization of glucose-6-phosphate to fructose-6-phosphate.</text>
</comment>
<comment type="catalytic activity">
    <reaction evidence="1">
        <text>alpha-D-glucose 6-phosphate = beta-D-fructose 6-phosphate</text>
        <dbReference type="Rhea" id="RHEA:11816"/>
        <dbReference type="ChEBI" id="CHEBI:57634"/>
        <dbReference type="ChEBI" id="CHEBI:58225"/>
        <dbReference type="EC" id="5.3.1.9"/>
    </reaction>
</comment>
<comment type="pathway">
    <text evidence="1">Carbohydrate biosynthesis; gluconeogenesis.</text>
</comment>
<comment type="pathway">
    <text evidence="1">Carbohydrate degradation; glycolysis; D-glyceraldehyde 3-phosphate and glycerone phosphate from D-glucose: step 2/4.</text>
</comment>
<comment type="subcellular location">
    <subcellularLocation>
        <location evidence="1">Cytoplasm</location>
    </subcellularLocation>
</comment>
<comment type="similarity">
    <text evidence="1">Belongs to the GPI family.</text>
</comment>
<protein>
    <recommendedName>
        <fullName evidence="1">Glucose-6-phosphate isomerase</fullName>
        <shortName evidence="1">GPI</shortName>
        <ecNumber evidence="1">5.3.1.9</ecNumber>
    </recommendedName>
    <alternativeName>
        <fullName evidence="1">Phosphoglucose isomerase</fullName>
        <shortName evidence="1">PGI</shortName>
    </alternativeName>
    <alternativeName>
        <fullName evidence="1">Phosphohexose isomerase</fullName>
        <shortName evidence="1">PHI</shortName>
    </alternativeName>
</protein>
<reference key="1">
    <citation type="submission" date="2007-07" db="EMBL/GenBank/DDBJ databases">
        <title>Complete sequence of chromosome of Xanthobacter autotrophicus Py2.</title>
        <authorList>
            <consortium name="US DOE Joint Genome Institute"/>
            <person name="Copeland A."/>
            <person name="Lucas S."/>
            <person name="Lapidus A."/>
            <person name="Barry K."/>
            <person name="Glavina del Rio T."/>
            <person name="Hammon N."/>
            <person name="Israni S."/>
            <person name="Dalin E."/>
            <person name="Tice H."/>
            <person name="Pitluck S."/>
            <person name="Sims D."/>
            <person name="Brettin T."/>
            <person name="Bruce D."/>
            <person name="Detter J.C."/>
            <person name="Han C."/>
            <person name="Tapia R."/>
            <person name="Brainard J."/>
            <person name="Schmutz J."/>
            <person name="Larimer F."/>
            <person name="Land M."/>
            <person name="Hauser L."/>
            <person name="Kyrpides N."/>
            <person name="Kim E."/>
            <person name="Ensigns S.A."/>
            <person name="Richardson P."/>
        </authorList>
    </citation>
    <scope>NUCLEOTIDE SEQUENCE [LARGE SCALE GENOMIC DNA]</scope>
    <source>
        <strain>ATCC BAA-1158 / Py2</strain>
    </source>
</reference>
<dbReference type="EC" id="5.3.1.9" evidence="1"/>
<dbReference type="EMBL" id="CP000781">
    <property type="protein sequence ID" value="ABS66499.1"/>
    <property type="molecule type" value="Genomic_DNA"/>
</dbReference>
<dbReference type="SMR" id="A7IEQ6"/>
<dbReference type="STRING" id="78245.Xaut_1250"/>
<dbReference type="KEGG" id="xau:Xaut_1250"/>
<dbReference type="eggNOG" id="COG0166">
    <property type="taxonomic scope" value="Bacteria"/>
</dbReference>
<dbReference type="HOGENOM" id="CLU_017947_3_1_5"/>
<dbReference type="OrthoDB" id="140919at2"/>
<dbReference type="PhylomeDB" id="A7IEQ6"/>
<dbReference type="UniPathway" id="UPA00109">
    <property type="reaction ID" value="UER00181"/>
</dbReference>
<dbReference type="UniPathway" id="UPA00138"/>
<dbReference type="Proteomes" id="UP000002417">
    <property type="component" value="Chromosome"/>
</dbReference>
<dbReference type="GO" id="GO:0005829">
    <property type="term" value="C:cytosol"/>
    <property type="evidence" value="ECO:0007669"/>
    <property type="project" value="TreeGrafter"/>
</dbReference>
<dbReference type="GO" id="GO:0097367">
    <property type="term" value="F:carbohydrate derivative binding"/>
    <property type="evidence" value="ECO:0007669"/>
    <property type="project" value="InterPro"/>
</dbReference>
<dbReference type="GO" id="GO:0004347">
    <property type="term" value="F:glucose-6-phosphate isomerase activity"/>
    <property type="evidence" value="ECO:0007669"/>
    <property type="project" value="UniProtKB-UniRule"/>
</dbReference>
<dbReference type="GO" id="GO:0048029">
    <property type="term" value="F:monosaccharide binding"/>
    <property type="evidence" value="ECO:0007669"/>
    <property type="project" value="TreeGrafter"/>
</dbReference>
<dbReference type="GO" id="GO:0006094">
    <property type="term" value="P:gluconeogenesis"/>
    <property type="evidence" value="ECO:0007669"/>
    <property type="project" value="UniProtKB-UniRule"/>
</dbReference>
<dbReference type="GO" id="GO:0051156">
    <property type="term" value="P:glucose 6-phosphate metabolic process"/>
    <property type="evidence" value="ECO:0007669"/>
    <property type="project" value="TreeGrafter"/>
</dbReference>
<dbReference type="GO" id="GO:0006096">
    <property type="term" value="P:glycolytic process"/>
    <property type="evidence" value="ECO:0007669"/>
    <property type="project" value="UniProtKB-UniRule"/>
</dbReference>
<dbReference type="CDD" id="cd05015">
    <property type="entry name" value="SIS_PGI_1"/>
    <property type="match status" value="1"/>
</dbReference>
<dbReference type="CDD" id="cd05016">
    <property type="entry name" value="SIS_PGI_2"/>
    <property type="match status" value="1"/>
</dbReference>
<dbReference type="Gene3D" id="1.10.1390.10">
    <property type="match status" value="1"/>
</dbReference>
<dbReference type="Gene3D" id="3.40.50.10490">
    <property type="entry name" value="Glucose-6-phosphate isomerase like protein, domain 1"/>
    <property type="match status" value="2"/>
</dbReference>
<dbReference type="HAMAP" id="MF_00473">
    <property type="entry name" value="G6P_isomerase"/>
    <property type="match status" value="1"/>
</dbReference>
<dbReference type="InterPro" id="IPR001672">
    <property type="entry name" value="G6P_Isomerase"/>
</dbReference>
<dbReference type="InterPro" id="IPR023096">
    <property type="entry name" value="G6P_Isomerase_C"/>
</dbReference>
<dbReference type="InterPro" id="IPR018189">
    <property type="entry name" value="Phosphoglucose_isomerase_CS"/>
</dbReference>
<dbReference type="InterPro" id="IPR046348">
    <property type="entry name" value="SIS_dom_sf"/>
</dbReference>
<dbReference type="InterPro" id="IPR035476">
    <property type="entry name" value="SIS_PGI_1"/>
</dbReference>
<dbReference type="InterPro" id="IPR035482">
    <property type="entry name" value="SIS_PGI_2"/>
</dbReference>
<dbReference type="NCBIfam" id="NF001211">
    <property type="entry name" value="PRK00179.1"/>
    <property type="match status" value="1"/>
</dbReference>
<dbReference type="PANTHER" id="PTHR11469">
    <property type="entry name" value="GLUCOSE-6-PHOSPHATE ISOMERASE"/>
    <property type="match status" value="1"/>
</dbReference>
<dbReference type="PANTHER" id="PTHR11469:SF1">
    <property type="entry name" value="GLUCOSE-6-PHOSPHATE ISOMERASE"/>
    <property type="match status" value="1"/>
</dbReference>
<dbReference type="Pfam" id="PF00342">
    <property type="entry name" value="PGI"/>
    <property type="match status" value="1"/>
</dbReference>
<dbReference type="PRINTS" id="PR00662">
    <property type="entry name" value="G6PISOMERASE"/>
</dbReference>
<dbReference type="SUPFAM" id="SSF53697">
    <property type="entry name" value="SIS domain"/>
    <property type="match status" value="1"/>
</dbReference>
<dbReference type="PROSITE" id="PS00765">
    <property type="entry name" value="P_GLUCOSE_ISOMERASE_1"/>
    <property type="match status" value="1"/>
</dbReference>
<dbReference type="PROSITE" id="PS00174">
    <property type="entry name" value="P_GLUCOSE_ISOMERASE_2"/>
    <property type="match status" value="1"/>
</dbReference>
<dbReference type="PROSITE" id="PS51463">
    <property type="entry name" value="P_GLUCOSE_ISOMERASE_3"/>
    <property type="match status" value="1"/>
</dbReference>
<name>G6PI_XANP2</name>
<feature type="chain" id="PRO_1000125776" description="Glucose-6-phosphate isomerase">
    <location>
        <begin position="1"/>
        <end position="547"/>
    </location>
</feature>
<feature type="active site" description="Proton donor" evidence="1">
    <location>
        <position position="351"/>
    </location>
</feature>
<feature type="active site" evidence="1">
    <location>
        <position position="382"/>
    </location>
</feature>
<feature type="active site" evidence="1">
    <location>
        <position position="511"/>
    </location>
</feature>
<sequence>MTSNAHATDAAFKALAIAWTTREGRILDLFAQPDRFERFSVAYGDLLIDFSKTAITDDILSQLLELARAGGVEAQRDAMFAGDHINLTEDRAVLHTALRDQASDTIQVDGIDVKPGVVETLARLGDFATGVREGRIAGARGGVITDVVNIGIGGSDLGPAMVTLALAPYHDGPRCHFVSNVDSAHITDVLKGLDPATTLFIVASKTFTTVETMTNAATARAFIVNALGEDAVGAHFAAVSTALDKVGAFGIPADRIFGFWDWVGGRYSVWSAIGLPLMLAIGPDRFREFLAGAAAMDEHFRSAVLDQNLPVLLGLIGLWHRNACGFPSRAIIPYDQRLARLPAYLQQLDMESNGKSVTRDGAAVSRPTGPIVWGEPGTNAQHAFFQLLHQGTDIVPVEFLVGAQSHEPALKDHQDLLVANCLAQSEALMRGRTLEEATAQLRAKGISEDKVAEIAPHRVFPGDRPSLTIAYATLDPFTLGRIIALYEHRVFVEAAVWGINGFDQWGVELGKELATQFLPAVTGGALPPSASASTSGLIAHLDAVAGG</sequence>
<gene>
    <name evidence="1" type="primary">pgi</name>
    <name type="ordered locus">Xaut_1250</name>
</gene>
<evidence type="ECO:0000255" key="1">
    <source>
        <dbReference type="HAMAP-Rule" id="MF_00473"/>
    </source>
</evidence>